<reference key="1">
    <citation type="journal article" date="2003" name="Nature">
        <title>The genome sequence of Bacillus anthracis Ames and comparison to closely related bacteria.</title>
        <authorList>
            <person name="Read T.D."/>
            <person name="Peterson S.N."/>
            <person name="Tourasse N.J."/>
            <person name="Baillie L.W."/>
            <person name="Paulsen I.T."/>
            <person name="Nelson K.E."/>
            <person name="Tettelin H."/>
            <person name="Fouts D.E."/>
            <person name="Eisen J.A."/>
            <person name="Gill S.R."/>
            <person name="Holtzapple E.K."/>
            <person name="Okstad O.A."/>
            <person name="Helgason E."/>
            <person name="Rilstone J."/>
            <person name="Wu M."/>
            <person name="Kolonay J.F."/>
            <person name="Beanan M.J."/>
            <person name="Dodson R.J."/>
            <person name="Brinkac L.M."/>
            <person name="Gwinn M.L."/>
            <person name="DeBoy R.T."/>
            <person name="Madpu R."/>
            <person name="Daugherty S.C."/>
            <person name="Durkin A.S."/>
            <person name="Haft D.H."/>
            <person name="Nelson W.C."/>
            <person name="Peterson J.D."/>
            <person name="Pop M."/>
            <person name="Khouri H.M."/>
            <person name="Radune D."/>
            <person name="Benton J.L."/>
            <person name="Mahamoud Y."/>
            <person name="Jiang L."/>
            <person name="Hance I.R."/>
            <person name="Weidman J.F."/>
            <person name="Berry K.J."/>
            <person name="Plaut R.D."/>
            <person name="Wolf A.M."/>
            <person name="Watkins K.L."/>
            <person name="Nierman W.C."/>
            <person name="Hazen A."/>
            <person name="Cline R.T."/>
            <person name="Redmond C."/>
            <person name="Thwaite J.E."/>
            <person name="White O."/>
            <person name="Salzberg S.L."/>
            <person name="Thomason B."/>
            <person name="Friedlander A.M."/>
            <person name="Koehler T.M."/>
            <person name="Hanna P.C."/>
            <person name="Kolstoe A.-B."/>
            <person name="Fraser C.M."/>
        </authorList>
    </citation>
    <scope>NUCLEOTIDE SEQUENCE [LARGE SCALE GENOMIC DNA]</scope>
    <source>
        <strain>Ames / isolate Porton</strain>
    </source>
</reference>
<reference key="2">
    <citation type="journal article" date="2009" name="J. Bacteriol.">
        <title>The complete genome sequence of Bacillus anthracis Ames 'Ancestor'.</title>
        <authorList>
            <person name="Ravel J."/>
            <person name="Jiang L."/>
            <person name="Stanley S.T."/>
            <person name="Wilson M.R."/>
            <person name="Decker R.S."/>
            <person name="Read T.D."/>
            <person name="Worsham P."/>
            <person name="Keim P.S."/>
            <person name="Salzberg S.L."/>
            <person name="Fraser-Liggett C.M."/>
            <person name="Rasko D.A."/>
        </authorList>
    </citation>
    <scope>NUCLEOTIDE SEQUENCE [LARGE SCALE GENOMIC DNA]</scope>
    <source>
        <strain>Ames ancestor</strain>
    </source>
</reference>
<reference key="3">
    <citation type="submission" date="2004-01" db="EMBL/GenBank/DDBJ databases">
        <title>Complete genome sequence of Bacillus anthracis Sterne.</title>
        <authorList>
            <person name="Brettin T.S."/>
            <person name="Bruce D."/>
            <person name="Challacombe J.F."/>
            <person name="Gilna P."/>
            <person name="Han C."/>
            <person name="Hill K."/>
            <person name="Hitchcock P."/>
            <person name="Jackson P."/>
            <person name="Keim P."/>
            <person name="Longmire J."/>
            <person name="Lucas S."/>
            <person name="Okinaka R."/>
            <person name="Richardson P."/>
            <person name="Rubin E."/>
            <person name="Tice H."/>
        </authorList>
    </citation>
    <scope>NUCLEOTIDE SEQUENCE [LARGE SCALE GENOMIC DNA]</scope>
    <source>
        <strain>Sterne</strain>
    </source>
</reference>
<sequence>MNKEERAKRQSKIRNFSIIAHIDHGKSTLADRILEKTNALTQREMKAQLLDSMDLERERGITIKLNAIQLNYKAKDGEEYILHLIDTPGHVDFTYEVSRSLAACEGAILVVDAAQGIEAQTLANVYLALDNNLEILPVINKIDLPSADPERVRQEVEDVIGLDASEAVLASAKAGIGIEEILEQIVEKVPAPTGDSEEPLQCMIFDSLYDPYRGVIAYIRVVNGTVKVGDKVRMMATGKEFEVTEVGVFTPKTTQRDELTVGDVGFLAASIKNVGDTRVGDTITHAKRPAAEPLAGYRKLNPMVFCGLYPIDSARYNDLRDALEKLELNDSALEFEPETSQALGFGFRCGFLGLLHMEILQERIEREFKIDLITTAPSVIYKVFLTNGEDMIVDNPSNMPDPQTIDRVEEPFVKAAIMVPNDYVGAVMEICQGKRGTFIDMQYLDETRVTLTYEIPLSEIVYDFFDQLKSNTKGYASFDYELIGYKPSKLVKMDILLNSEQVDALSFIVHRDSAYDRGKVIVEKLKELIPRQQFEVPIQATIGNKVVARSTIKAMRKNVLAKCYGGDISRKRKLLDKQKEGKKRMKSVGSVEVPQEAFMAVLKMDDN</sequence>
<dbReference type="EC" id="3.6.5.n1" evidence="1"/>
<dbReference type="EMBL" id="AE016879">
    <property type="protein sequence ID" value="AAP28253.1"/>
    <property type="molecule type" value="Genomic_DNA"/>
</dbReference>
<dbReference type="EMBL" id="AE017334">
    <property type="protein sequence ID" value="AAT33665.1"/>
    <property type="molecule type" value="Genomic_DNA"/>
</dbReference>
<dbReference type="EMBL" id="AE017225">
    <property type="protein sequence ID" value="AAT56517.1"/>
    <property type="molecule type" value="Genomic_DNA"/>
</dbReference>
<dbReference type="RefSeq" id="NP_846767.1">
    <property type="nucleotide sequence ID" value="NC_003997.3"/>
</dbReference>
<dbReference type="RefSeq" id="WP_001030947.1">
    <property type="nucleotide sequence ID" value="NZ_WXXJ01000027.1"/>
</dbReference>
<dbReference type="SMR" id="Q81LR7"/>
<dbReference type="IntAct" id="Q81LR7">
    <property type="interactions" value="8"/>
</dbReference>
<dbReference type="STRING" id="261594.GBAA_4544"/>
<dbReference type="DNASU" id="1088274"/>
<dbReference type="GeneID" id="45024196"/>
<dbReference type="KEGG" id="ban:BA_4544"/>
<dbReference type="KEGG" id="bar:GBAA_4544"/>
<dbReference type="KEGG" id="bat:BAS4218"/>
<dbReference type="PATRIC" id="fig|198094.11.peg.4512"/>
<dbReference type="eggNOG" id="COG0481">
    <property type="taxonomic scope" value="Bacteria"/>
</dbReference>
<dbReference type="HOGENOM" id="CLU_009995_3_3_9"/>
<dbReference type="OMA" id="QVKCDEN"/>
<dbReference type="OrthoDB" id="9804431at2"/>
<dbReference type="Proteomes" id="UP000000427">
    <property type="component" value="Chromosome"/>
</dbReference>
<dbReference type="Proteomes" id="UP000000594">
    <property type="component" value="Chromosome"/>
</dbReference>
<dbReference type="GO" id="GO:0005886">
    <property type="term" value="C:plasma membrane"/>
    <property type="evidence" value="ECO:0007669"/>
    <property type="project" value="UniProtKB-SubCell"/>
</dbReference>
<dbReference type="GO" id="GO:0005525">
    <property type="term" value="F:GTP binding"/>
    <property type="evidence" value="ECO:0007669"/>
    <property type="project" value="UniProtKB-UniRule"/>
</dbReference>
<dbReference type="GO" id="GO:0003924">
    <property type="term" value="F:GTPase activity"/>
    <property type="evidence" value="ECO:0007669"/>
    <property type="project" value="UniProtKB-UniRule"/>
</dbReference>
<dbReference type="GO" id="GO:0043022">
    <property type="term" value="F:ribosome binding"/>
    <property type="evidence" value="ECO:0007669"/>
    <property type="project" value="UniProtKB-UniRule"/>
</dbReference>
<dbReference type="GO" id="GO:0003746">
    <property type="term" value="F:translation elongation factor activity"/>
    <property type="evidence" value="ECO:0007669"/>
    <property type="project" value="UniProtKB-UniRule"/>
</dbReference>
<dbReference type="GO" id="GO:0045727">
    <property type="term" value="P:positive regulation of translation"/>
    <property type="evidence" value="ECO:0007669"/>
    <property type="project" value="UniProtKB-UniRule"/>
</dbReference>
<dbReference type="CDD" id="cd03699">
    <property type="entry name" value="EF4_II"/>
    <property type="match status" value="1"/>
</dbReference>
<dbReference type="CDD" id="cd16260">
    <property type="entry name" value="EF4_III"/>
    <property type="match status" value="1"/>
</dbReference>
<dbReference type="CDD" id="cd01890">
    <property type="entry name" value="LepA"/>
    <property type="match status" value="1"/>
</dbReference>
<dbReference type="CDD" id="cd03709">
    <property type="entry name" value="lepA_C"/>
    <property type="match status" value="1"/>
</dbReference>
<dbReference type="FunFam" id="3.40.50.300:FF:000078">
    <property type="entry name" value="Elongation factor 4"/>
    <property type="match status" value="1"/>
</dbReference>
<dbReference type="FunFam" id="2.40.30.10:FF:000015">
    <property type="entry name" value="Translation factor GUF1, mitochondrial"/>
    <property type="match status" value="1"/>
</dbReference>
<dbReference type="FunFam" id="3.30.70.240:FF:000007">
    <property type="entry name" value="Translation factor GUF1, mitochondrial"/>
    <property type="match status" value="1"/>
</dbReference>
<dbReference type="FunFam" id="3.30.70.2570:FF:000001">
    <property type="entry name" value="Translation factor GUF1, mitochondrial"/>
    <property type="match status" value="1"/>
</dbReference>
<dbReference type="FunFam" id="3.30.70.870:FF:000004">
    <property type="entry name" value="Translation factor GUF1, mitochondrial"/>
    <property type="match status" value="1"/>
</dbReference>
<dbReference type="Gene3D" id="3.30.70.240">
    <property type="match status" value="1"/>
</dbReference>
<dbReference type="Gene3D" id="3.30.70.2570">
    <property type="entry name" value="Elongation factor 4, C-terminal domain"/>
    <property type="match status" value="1"/>
</dbReference>
<dbReference type="Gene3D" id="3.30.70.870">
    <property type="entry name" value="Elongation Factor G (Translational Gtpase), domain 3"/>
    <property type="match status" value="1"/>
</dbReference>
<dbReference type="Gene3D" id="3.40.50.300">
    <property type="entry name" value="P-loop containing nucleotide triphosphate hydrolases"/>
    <property type="match status" value="1"/>
</dbReference>
<dbReference type="Gene3D" id="2.40.30.10">
    <property type="entry name" value="Translation factors"/>
    <property type="match status" value="1"/>
</dbReference>
<dbReference type="HAMAP" id="MF_00071">
    <property type="entry name" value="LepA"/>
    <property type="match status" value="1"/>
</dbReference>
<dbReference type="InterPro" id="IPR006297">
    <property type="entry name" value="EF-4"/>
</dbReference>
<dbReference type="InterPro" id="IPR035647">
    <property type="entry name" value="EFG_III/V"/>
</dbReference>
<dbReference type="InterPro" id="IPR000640">
    <property type="entry name" value="EFG_V-like"/>
</dbReference>
<dbReference type="InterPro" id="IPR004161">
    <property type="entry name" value="EFTu-like_2"/>
</dbReference>
<dbReference type="InterPro" id="IPR031157">
    <property type="entry name" value="G_TR_CS"/>
</dbReference>
<dbReference type="InterPro" id="IPR038363">
    <property type="entry name" value="LepA_C_sf"/>
</dbReference>
<dbReference type="InterPro" id="IPR013842">
    <property type="entry name" value="LepA_CTD"/>
</dbReference>
<dbReference type="InterPro" id="IPR035654">
    <property type="entry name" value="LepA_IV"/>
</dbReference>
<dbReference type="InterPro" id="IPR027417">
    <property type="entry name" value="P-loop_NTPase"/>
</dbReference>
<dbReference type="InterPro" id="IPR005225">
    <property type="entry name" value="Small_GTP-bd"/>
</dbReference>
<dbReference type="InterPro" id="IPR000795">
    <property type="entry name" value="T_Tr_GTP-bd_dom"/>
</dbReference>
<dbReference type="NCBIfam" id="TIGR01393">
    <property type="entry name" value="lepA"/>
    <property type="match status" value="1"/>
</dbReference>
<dbReference type="NCBIfam" id="TIGR00231">
    <property type="entry name" value="small_GTP"/>
    <property type="match status" value="1"/>
</dbReference>
<dbReference type="PANTHER" id="PTHR43512:SF4">
    <property type="entry name" value="TRANSLATION FACTOR GUF1 HOMOLOG, CHLOROPLASTIC"/>
    <property type="match status" value="1"/>
</dbReference>
<dbReference type="PANTHER" id="PTHR43512">
    <property type="entry name" value="TRANSLATION FACTOR GUF1-RELATED"/>
    <property type="match status" value="1"/>
</dbReference>
<dbReference type="Pfam" id="PF00679">
    <property type="entry name" value="EFG_C"/>
    <property type="match status" value="1"/>
</dbReference>
<dbReference type="Pfam" id="PF00009">
    <property type="entry name" value="GTP_EFTU"/>
    <property type="match status" value="1"/>
</dbReference>
<dbReference type="Pfam" id="PF03144">
    <property type="entry name" value="GTP_EFTU_D2"/>
    <property type="match status" value="1"/>
</dbReference>
<dbReference type="Pfam" id="PF06421">
    <property type="entry name" value="LepA_C"/>
    <property type="match status" value="1"/>
</dbReference>
<dbReference type="PRINTS" id="PR00315">
    <property type="entry name" value="ELONGATNFCT"/>
</dbReference>
<dbReference type="SMART" id="SM00838">
    <property type="entry name" value="EFG_C"/>
    <property type="match status" value="1"/>
</dbReference>
<dbReference type="SUPFAM" id="SSF54980">
    <property type="entry name" value="EF-G C-terminal domain-like"/>
    <property type="match status" value="2"/>
</dbReference>
<dbReference type="SUPFAM" id="SSF52540">
    <property type="entry name" value="P-loop containing nucleoside triphosphate hydrolases"/>
    <property type="match status" value="1"/>
</dbReference>
<dbReference type="PROSITE" id="PS00301">
    <property type="entry name" value="G_TR_1"/>
    <property type="match status" value="1"/>
</dbReference>
<dbReference type="PROSITE" id="PS51722">
    <property type="entry name" value="G_TR_2"/>
    <property type="match status" value="1"/>
</dbReference>
<keyword id="KW-1003">Cell membrane</keyword>
<keyword id="KW-0342">GTP-binding</keyword>
<keyword id="KW-0378">Hydrolase</keyword>
<keyword id="KW-0472">Membrane</keyword>
<keyword id="KW-0547">Nucleotide-binding</keyword>
<keyword id="KW-0648">Protein biosynthesis</keyword>
<keyword id="KW-1185">Reference proteome</keyword>
<accession>Q81LR7</accession>
<accession>Q6HT72</accession>
<accession>Q6KMG2</accession>
<comment type="function">
    <text evidence="1">Required for accurate and efficient protein synthesis under certain stress conditions. May act as a fidelity factor of the translation reaction, by catalyzing a one-codon backward translocation of tRNAs on improperly translocated ribosomes. Back-translocation proceeds from a post-translocation (POST) complex to a pre-translocation (PRE) complex, thus giving elongation factor G a second chance to translocate the tRNAs correctly. Binds to ribosomes in a GTP-dependent manner.</text>
</comment>
<comment type="catalytic activity">
    <reaction evidence="1">
        <text>GTP + H2O = GDP + phosphate + H(+)</text>
        <dbReference type="Rhea" id="RHEA:19669"/>
        <dbReference type="ChEBI" id="CHEBI:15377"/>
        <dbReference type="ChEBI" id="CHEBI:15378"/>
        <dbReference type="ChEBI" id="CHEBI:37565"/>
        <dbReference type="ChEBI" id="CHEBI:43474"/>
        <dbReference type="ChEBI" id="CHEBI:58189"/>
        <dbReference type="EC" id="3.6.5.n1"/>
    </reaction>
</comment>
<comment type="subcellular location">
    <subcellularLocation>
        <location evidence="1">Cell membrane</location>
        <topology evidence="1">Peripheral membrane protein</topology>
        <orientation evidence="1">Cytoplasmic side</orientation>
    </subcellularLocation>
</comment>
<comment type="similarity">
    <text evidence="1">Belongs to the TRAFAC class translation factor GTPase superfamily. Classic translation factor GTPase family. LepA subfamily.</text>
</comment>
<evidence type="ECO:0000255" key="1">
    <source>
        <dbReference type="HAMAP-Rule" id="MF_00071"/>
    </source>
</evidence>
<evidence type="ECO:0000305" key="2"/>
<protein>
    <recommendedName>
        <fullName evidence="1">Elongation factor 4</fullName>
        <shortName evidence="1">EF-4</shortName>
        <ecNumber evidence="1">3.6.5.n1</ecNumber>
    </recommendedName>
    <alternativeName>
        <fullName evidence="1">Ribosomal back-translocase LepA</fullName>
    </alternativeName>
</protein>
<gene>
    <name evidence="1" type="primary">lepA</name>
    <name type="ordered locus">BA_4544</name>
    <name type="ordered locus">GBAA_4544</name>
    <name type="ordered locus">BAS4218</name>
</gene>
<proteinExistence type="inferred from homology"/>
<name>LEPA_BACAN</name>
<organism>
    <name type="scientific">Bacillus anthracis</name>
    <dbReference type="NCBI Taxonomy" id="1392"/>
    <lineage>
        <taxon>Bacteria</taxon>
        <taxon>Bacillati</taxon>
        <taxon>Bacillota</taxon>
        <taxon>Bacilli</taxon>
        <taxon>Bacillales</taxon>
        <taxon>Bacillaceae</taxon>
        <taxon>Bacillus</taxon>
        <taxon>Bacillus cereus group</taxon>
    </lineage>
</organism>
<feature type="chain" id="PRO_0000176224" description="Elongation factor 4">
    <location>
        <begin position="1"/>
        <end position="607"/>
    </location>
</feature>
<feature type="domain" description="tr-type G">
    <location>
        <begin position="11"/>
        <end position="193"/>
    </location>
</feature>
<feature type="binding site" evidence="1">
    <location>
        <begin position="23"/>
        <end position="28"/>
    </location>
    <ligand>
        <name>GTP</name>
        <dbReference type="ChEBI" id="CHEBI:37565"/>
    </ligand>
</feature>
<feature type="binding site" evidence="1">
    <location>
        <begin position="140"/>
        <end position="143"/>
    </location>
    <ligand>
        <name>GTP</name>
        <dbReference type="ChEBI" id="CHEBI:37565"/>
    </ligand>
</feature>
<feature type="sequence conflict" description="In Ref. 3; AAT56517." evidence="2" ref="3">
    <original>I</original>
    <variation>V</variation>
    <location>
        <position position="68"/>
    </location>
</feature>